<gene>
    <name type="primary">ANG</name>
    <name type="synonym">RNASE5</name>
</gene>
<name>ANGI_SAISC</name>
<organism>
    <name type="scientific">Saimiri sciureus</name>
    <name type="common">Common squirrel monkey</name>
    <dbReference type="NCBI Taxonomy" id="9521"/>
    <lineage>
        <taxon>Eukaryota</taxon>
        <taxon>Metazoa</taxon>
        <taxon>Chordata</taxon>
        <taxon>Craniata</taxon>
        <taxon>Vertebrata</taxon>
        <taxon>Euteleostomi</taxon>
        <taxon>Mammalia</taxon>
        <taxon>Eutheria</taxon>
        <taxon>Euarchontoglires</taxon>
        <taxon>Primates</taxon>
        <taxon>Haplorrhini</taxon>
        <taxon>Platyrrhini</taxon>
        <taxon>Cebidae</taxon>
        <taxon>Saimiriinae</taxon>
        <taxon>Saimiri</taxon>
    </lineage>
</organism>
<accession>Q8WN60</accession>
<comment type="function">
    <text evidence="1 2">Secreted ribonuclease that can either promote or restrict cell proliferation of target cells, depending on the context. Endocytosed in target cells via its receptor PLXNB2 and translocates to the cytoplasm or nucleus. Under stress conditions, localizes to the cytoplasm and promotes the assembly of stress granules (SGs): specifically cleaves a subset of tRNAs within anticodon loops to produce tRNA-derived stress-induced fragments (tiRNAs), resulting in translation repression and inhibition of cell proliferation (By similarity). tiRNas also prevent formation of apoptosome, thereby promoting cell survival (By similarity). Preferentially cleaves RNAs between a pyrimidine and an adenosine residue, suggesting that it cleaves the anticodon loop of tRNA(Ala) (32-UUAGCAU-38) after positions 33 and 36. Cleaves a subset of tRNAs, including tRNA(Ala), tRNA(Glu), tRNA(Gly), tRNA(Lys), tRNA(Val), tRNA(His), tRNA(Asp) and tRNA(Sec). Under growth conditions and in differentiated cells, translocates to the nucleus and stimulates ribosomal RNA (rRNA) transcription, including that containing the initiation site sequences of 45S rRNA, thereby promoting cell growth and proliferation. Angiogenin induces vascularization of normal and malignant tissues via its ability to promote rRNA transcription. Involved in hematopoietic stem and progenitor cell (HSPC) growth and survival by promoting rRNA transcription in growth conditions and inhibiting translation in response to stress, respectively. Mediates the crosstalk between myeloid and intestinal epithelial cells to protect the intestinal epithelial barrier integrity: secreted by myeloid cells and promotes intestinal epithelial cells proliferation and survival (By similarity). Also mediates osteoclast-endothelial cell crosstalk in growing bone: produced by osteoclasts and protects the neighboring vascular cells against senescence by promoting rRNA transcription (By similarity).</text>
</comment>
<comment type="activity regulation">
    <text evidence="1">Has weak tRNA ribonuclease activity by itself due to partial autoinhibition by its C-terminus, which folds into a short alpha-helix that partially occludes the substrate-binding site. In absence of stress, the ribonuclease activity is inhibited by RNH1 in the cytoplasm. In response to stress, dissociates from RNH1 in the cytoplasm and associates with cytoplasmic ribosomes with vacant A-sites: ribosomes directly activate the tRNA ribonuclease activity of ANG by refolding the C-terminal alpha-helix. In response to stress, the angiogenic activity of ANG is inhibited by RNH1 in the nucleus.</text>
</comment>
<comment type="subunit">
    <text evidence="1">Homodimer. Interacts with RNH1; inhibiting ANG ribonuclease activity. Interacts with PCNA.</text>
</comment>
<comment type="subcellular location">
    <subcellularLocation>
        <location evidence="1">Secreted</location>
    </subcellularLocation>
    <subcellularLocation>
        <location evidence="1">Nucleus</location>
    </subcellularLocation>
    <subcellularLocation>
        <location evidence="1">Nucleus</location>
        <location evidence="1">Nucleolus</location>
    </subcellularLocation>
    <subcellularLocation>
        <location evidence="1">Cytoplasm</location>
        <location evidence="1">Stress granule</location>
    </subcellularLocation>
    <text evidence="1">The secreted protein is rapidly endocytosed by target cells following interaction with PLXNB2 receptor and translocated to the cytoplasm and nucleus. In the nucleus, accumulates in the nucleolus and binds to DNA.</text>
</comment>
<comment type="similarity">
    <text evidence="3">Belongs to the pancreatic ribonuclease family.</text>
</comment>
<keyword id="KW-0037">Angiogenesis</keyword>
<keyword id="KW-0963">Cytoplasm</keyword>
<keyword id="KW-0217">Developmental protein</keyword>
<keyword id="KW-0221">Differentiation</keyword>
<keyword id="KW-1015">Disulfide bond</keyword>
<keyword id="KW-0238">DNA-binding</keyword>
<keyword id="KW-0255">Endonuclease</keyword>
<keyword id="KW-0378">Hydrolase</keyword>
<keyword id="KW-0540">Nuclease</keyword>
<keyword id="KW-0539">Nucleus</keyword>
<keyword id="KW-0652">Protein synthesis inhibitor</keyword>
<keyword id="KW-0873">Pyrrolidone carboxylic acid</keyword>
<keyword id="KW-0964">Secreted</keyword>
<keyword id="KW-0732">Signal</keyword>
<keyword id="KW-0346">Stress response</keyword>
<proteinExistence type="inferred from homology"/>
<protein>
    <recommendedName>
        <fullName>Angiogenin</fullName>
        <ecNumber evidence="1">3.1.27.-</ecNumber>
    </recommendedName>
    <alternativeName>
        <fullName>Ribonuclease 5</fullName>
        <shortName>RNase 5</shortName>
    </alternativeName>
</protein>
<dbReference type="EC" id="3.1.27.-" evidence="1"/>
<dbReference type="EMBL" id="AF441670">
    <property type="protein sequence ID" value="AAL61652.1"/>
    <property type="molecule type" value="Genomic_DNA"/>
</dbReference>
<dbReference type="SMR" id="Q8WN60"/>
<dbReference type="GO" id="GO:0032311">
    <property type="term" value="C:angiogenin-PRI complex"/>
    <property type="evidence" value="ECO:0000250"/>
    <property type="project" value="UniProtKB"/>
</dbReference>
<dbReference type="GO" id="GO:0005604">
    <property type="term" value="C:basement membrane"/>
    <property type="evidence" value="ECO:0000250"/>
    <property type="project" value="UniProtKB"/>
</dbReference>
<dbReference type="GO" id="GO:0005737">
    <property type="term" value="C:cytoplasm"/>
    <property type="evidence" value="ECO:0000250"/>
    <property type="project" value="UniProtKB"/>
</dbReference>
<dbReference type="GO" id="GO:0010494">
    <property type="term" value="C:cytoplasmic stress granule"/>
    <property type="evidence" value="ECO:0007669"/>
    <property type="project" value="UniProtKB-SubCell"/>
</dbReference>
<dbReference type="GO" id="GO:0030139">
    <property type="term" value="C:endocytic vesicle"/>
    <property type="evidence" value="ECO:0000250"/>
    <property type="project" value="UniProtKB"/>
</dbReference>
<dbReference type="GO" id="GO:0005615">
    <property type="term" value="C:extracellular space"/>
    <property type="evidence" value="ECO:0000250"/>
    <property type="project" value="UniProtKB"/>
</dbReference>
<dbReference type="GO" id="GO:0005730">
    <property type="term" value="C:nucleolus"/>
    <property type="evidence" value="ECO:0000250"/>
    <property type="project" value="UniProtKB"/>
</dbReference>
<dbReference type="GO" id="GO:0005634">
    <property type="term" value="C:nucleus"/>
    <property type="evidence" value="ECO:0000250"/>
    <property type="project" value="UniProtKB"/>
</dbReference>
<dbReference type="GO" id="GO:0003779">
    <property type="term" value="F:actin binding"/>
    <property type="evidence" value="ECO:0000250"/>
    <property type="project" value="UniProtKB"/>
</dbReference>
<dbReference type="GO" id="GO:0005507">
    <property type="term" value="F:copper ion binding"/>
    <property type="evidence" value="ECO:0000250"/>
    <property type="project" value="UniProtKB"/>
</dbReference>
<dbReference type="GO" id="GO:0003677">
    <property type="term" value="F:DNA binding"/>
    <property type="evidence" value="ECO:0007669"/>
    <property type="project" value="UniProtKB-KW"/>
</dbReference>
<dbReference type="GO" id="GO:0004519">
    <property type="term" value="F:endonuclease activity"/>
    <property type="evidence" value="ECO:0007669"/>
    <property type="project" value="UniProtKB-KW"/>
</dbReference>
<dbReference type="GO" id="GO:0008201">
    <property type="term" value="F:heparin binding"/>
    <property type="evidence" value="ECO:0000250"/>
    <property type="project" value="UniProtKB"/>
</dbReference>
<dbReference type="GO" id="GO:0042803">
    <property type="term" value="F:protein homodimerization activity"/>
    <property type="evidence" value="ECO:0000250"/>
    <property type="project" value="UniProtKB"/>
</dbReference>
<dbReference type="GO" id="GO:0004540">
    <property type="term" value="F:RNA nuclease activity"/>
    <property type="evidence" value="ECO:0000250"/>
    <property type="project" value="UniProtKB"/>
</dbReference>
<dbReference type="GO" id="GO:0005102">
    <property type="term" value="F:signaling receptor binding"/>
    <property type="evidence" value="ECO:0000250"/>
    <property type="project" value="UniProtKB"/>
</dbReference>
<dbReference type="GO" id="GO:0004549">
    <property type="term" value="F:tRNA-specific ribonuclease activity"/>
    <property type="evidence" value="ECO:0000250"/>
    <property type="project" value="UniProtKB"/>
</dbReference>
<dbReference type="GO" id="GO:0030041">
    <property type="term" value="P:actin filament polymerization"/>
    <property type="evidence" value="ECO:0000250"/>
    <property type="project" value="UniProtKB"/>
</dbReference>
<dbReference type="GO" id="GO:0001525">
    <property type="term" value="P:angiogenesis"/>
    <property type="evidence" value="ECO:0000250"/>
    <property type="project" value="UniProtKB"/>
</dbReference>
<dbReference type="GO" id="GO:0019731">
    <property type="term" value="P:antibacterial humoral response"/>
    <property type="evidence" value="ECO:0007669"/>
    <property type="project" value="TreeGrafter"/>
</dbReference>
<dbReference type="GO" id="GO:0061844">
    <property type="term" value="P:antimicrobial humoral immune response mediated by antimicrobial peptide"/>
    <property type="evidence" value="ECO:0007669"/>
    <property type="project" value="TreeGrafter"/>
</dbReference>
<dbReference type="GO" id="GO:0050830">
    <property type="term" value="P:defense response to Gram-positive bacterium"/>
    <property type="evidence" value="ECO:0007669"/>
    <property type="project" value="TreeGrafter"/>
</dbReference>
<dbReference type="GO" id="GO:0071425">
    <property type="term" value="P:hematopoietic stem cell proliferation"/>
    <property type="evidence" value="ECO:0000250"/>
    <property type="project" value="UniProtKB"/>
</dbReference>
<dbReference type="GO" id="GO:0045087">
    <property type="term" value="P:innate immune response"/>
    <property type="evidence" value="ECO:0007669"/>
    <property type="project" value="TreeGrafter"/>
</dbReference>
<dbReference type="GO" id="GO:0043066">
    <property type="term" value="P:negative regulation of apoptotic process"/>
    <property type="evidence" value="ECO:0000250"/>
    <property type="project" value="UniProtKB"/>
</dbReference>
<dbReference type="GO" id="GO:0048662">
    <property type="term" value="P:negative regulation of smooth muscle cell proliferation"/>
    <property type="evidence" value="ECO:0000250"/>
    <property type="project" value="UniProtKB"/>
</dbReference>
<dbReference type="GO" id="GO:0032055">
    <property type="term" value="P:negative regulation of translation in response to stress"/>
    <property type="evidence" value="ECO:0000250"/>
    <property type="project" value="UniProtKB"/>
</dbReference>
<dbReference type="GO" id="GO:0001938">
    <property type="term" value="P:positive regulation of endothelial cell proliferation"/>
    <property type="evidence" value="ECO:0000250"/>
    <property type="project" value="UniProtKB"/>
</dbReference>
<dbReference type="GO" id="GO:0050714">
    <property type="term" value="P:positive regulation of protein secretion"/>
    <property type="evidence" value="ECO:0000250"/>
    <property type="project" value="UniProtKB"/>
</dbReference>
<dbReference type="GO" id="GO:0001666">
    <property type="term" value="P:response to hypoxia"/>
    <property type="evidence" value="ECO:0000250"/>
    <property type="project" value="UniProtKB"/>
</dbReference>
<dbReference type="GO" id="GO:0009303">
    <property type="term" value="P:rRNA transcription"/>
    <property type="evidence" value="ECO:0000250"/>
    <property type="project" value="UniProtKB"/>
</dbReference>
<dbReference type="GO" id="GO:0023052">
    <property type="term" value="P:signaling"/>
    <property type="evidence" value="ECO:0000250"/>
    <property type="project" value="UniProtKB"/>
</dbReference>
<dbReference type="GO" id="GO:0034063">
    <property type="term" value="P:stress granule assembly"/>
    <property type="evidence" value="ECO:0000250"/>
    <property type="project" value="UniProtKB"/>
</dbReference>
<dbReference type="CDD" id="cd06265">
    <property type="entry name" value="RNase_A_canonical"/>
    <property type="match status" value="1"/>
</dbReference>
<dbReference type="FunFam" id="3.10.130.10:FF:000001">
    <property type="entry name" value="Ribonuclease pancreatic"/>
    <property type="match status" value="1"/>
</dbReference>
<dbReference type="Gene3D" id="3.10.130.10">
    <property type="entry name" value="Ribonuclease A-like domain"/>
    <property type="match status" value="1"/>
</dbReference>
<dbReference type="InterPro" id="IPR001427">
    <property type="entry name" value="RNaseA"/>
</dbReference>
<dbReference type="InterPro" id="IPR036816">
    <property type="entry name" value="RNaseA-like_dom_sf"/>
</dbReference>
<dbReference type="InterPro" id="IPR023411">
    <property type="entry name" value="RNaseA_AS"/>
</dbReference>
<dbReference type="InterPro" id="IPR023412">
    <property type="entry name" value="RNaseA_domain"/>
</dbReference>
<dbReference type="PANTHER" id="PTHR11437:SF60">
    <property type="entry name" value="ANGIOGENIN"/>
    <property type="match status" value="1"/>
</dbReference>
<dbReference type="PANTHER" id="PTHR11437">
    <property type="entry name" value="RIBONUCLEASE"/>
    <property type="match status" value="1"/>
</dbReference>
<dbReference type="Pfam" id="PF00074">
    <property type="entry name" value="RnaseA"/>
    <property type="match status" value="1"/>
</dbReference>
<dbReference type="PRINTS" id="PR00794">
    <property type="entry name" value="RIBONUCLEASE"/>
</dbReference>
<dbReference type="SMART" id="SM00092">
    <property type="entry name" value="RNAse_Pc"/>
    <property type="match status" value="1"/>
</dbReference>
<dbReference type="SUPFAM" id="SSF54076">
    <property type="entry name" value="RNase A-like"/>
    <property type="match status" value="1"/>
</dbReference>
<dbReference type="PROSITE" id="PS00127">
    <property type="entry name" value="RNASE_PANCREATIC"/>
    <property type="match status" value="1"/>
</dbReference>
<evidence type="ECO:0000250" key="1">
    <source>
        <dbReference type="UniProtKB" id="P03950"/>
    </source>
</evidence>
<evidence type="ECO:0000250" key="2">
    <source>
        <dbReference type="UniProtKB" id="P21570"/>
    </source>
</evidence>
<evidence type="ECO:0000305" key="3"/>
<sequence length="146" mass="16387">MVMGPHLLLLVFILGLGLTPPTLAQNDSRYIKFLDQHYDPKTKNGNDKYCEKMMRLRNMISPCKEINTFIHGNKASIKAICGNQNGQPYNGNQRISTSAFQVTICRHIGGSPRPPCRYRATAGFRNIVIACENGLPVHLDESIFRP</sequence>
<reference key="1">
    <citation type="journal article" date="2002" name="Mol. Biol. Evol.">
        <title>Diversifying selection of the tumor-growth promoter angiogenin in primate evolution.</title>
        <authorList>
            <person name="Zhang J."/>
            <person name="Rosenberg H.F."/>
        </authorList>
    </citation>
    <scope>NUCLEOTIDE SEQUENCE [GENOMIC DNA]</scope>
</reference>
<feature type="signal peptide" evidence="1">
    <location>
        <begin position="1"/>
        <end position="24"/>
    </location>
</feature>
<feature type="chain" id="PRO_0000030853" description="Angiogenin">
    <location>
        <begin position="25"/>
        <end position="146"/>
    </location>
</feature>
<feature type="short sequence motif" description="Nucleolar localization signal" evidence="1">
    <location>
        <begin position="55"/>
        <end position="59"/>
    </location>
</feature>
<feature type="active site" description="Proton acceptor" evidence="1">
    <location>
        <position position="37"/>
    </location>
</feature>
<feature type="active site" description="Proton donor" evidence="1">
    <location>
        <position position="138"/>
    </location>
</feature>
<feature type="binding site" evidence="1">
    <location>
        <position position="105"/>
    </location>
    <ligand>
        <name>tRNA</name>
        <dbReference type="ChEBI" id="CHEBI:17843"/>
    </ligand>
</feature>
<feature type="binding site" evidence="1">
    <location>
        <position position="127"/>
    </location>
    <ligand>
        <name>tRNA</name>
        <dbReference type="ChEBI" id="CHEBI:17843"/>
    </ligand>
</feature>
<feature type="modified residue" description="Pyrrolidone carboxylic acid" evidence="1">
    <location>
        <position position="25"/>
    </location>
</feature>
<feature type="disulfide bond" evidence="1">
    <location>
        <begin position="50"/>
        <end position="105"/>
    </location>
</feature>
<feature type="disulfide bond" evidence="1">
    <location>
        <begin position="63"/>
        <end position="116"/>
    </location>
</feature>
<feature type="disulfide bond" evidence="1">
    <location>
        <begin position="81"/>
        <end position="131"/>
    </location>
</feature>